<evidence type="ECO:0000255" key="1">
    <source>
        <dbReference type="HAMAP-Rule" id="MF_00015"/>
    </source>
</evidence>
<evidence type="ECO:0000256" key="2">
    <source>
        <dbReference type="SAM" id="MobiDB-lite"/>
    </source>
</evidence>
<keyword id="KW-0068">Autocatalytic cleavage</keyword>
<keyword id="KW-0227">DNA damage</keyword>
<keyword id="KW-0234">DNA repair</keyword>
<keyword id="KW-0235">DNA replication</keyword>
<keyword id="KW-0238">DNA-binding</keyword>
<keyword id="KW-0378">Hydrolase</keyword>
<keyword id="KW-1185">Reference proteome</keyword>
<keyword id="KW-0678">Repressor</keyword>
<keyword id="KW-0742">SOS response</keyword>
<keyword id="KW-0804">Transcription</keyword>
<keyword id="KW-0805">Transcription regulation</keyword>
<feature type="chain" id="PRO_1000074056" description="LexA repressor">
    <location>
        <begin position="1"/>
        <end position="253"/>
    </location>
</feature>
<feature type="DNA-binding region" description="H-T-H motif" evidence="1">
    <location>
        <begin position="26"/>
        <end position="46"/>
    </location>
</feature>
<feature type="region of interest" description="Disordered" evidence="2">
    <location>
        <begin position="73"/>
        <end position="97"/>
    </location>
</feature>
<feature type="active site" description="For autocatalytic cleavage activity" evidence="1">
    <location>
        <position position="174"/>
    </location>
</feature>
<feature type="active site" description="For autocatalytic cleavage activity" evidence="1">
    <location>
        <position position="212"/>
    </location>
</feature>
<feature type="site" description="Cleavage; by autolysis" evidence="1">
    <location>
        <begin position="139"/>
        <end position="140"/>
    </location>
</feature>
<accession>A9HJ64</accession>
<accession>B5ZK06</accession>
<reference key="1">
    <citation type="journal article" date="2009" name="BMC Genomics">
        <title>Complete genome sequence of the sugarcane nitrogen-fixing endophyte Gluconacetobacter diazotrophicus Pal5.</title>
        <authorList>
            <person name="Bertalan M."/>
            <person name="Albano R."/>
            <person name="de Padua V."/>
            <person name="Rouws L."/>
            <person name="Rojas C."/>
            <person name="Hemerly A."/>
            <person name="Teixeira K."/>
            <person name="Schwab S."/>
            <person name="Araujo J."/>
            <person name="Oliveira A."/>
            <person name="Franca L."/>
            <person name="Magalhaes V."/>
            <person name="Alqueres S."/>
            <person name="Cardoso A."/>
            <person name="Almeida W."/>
            <person name="Loureiro M.M."/>
            <person name="Nogueira E."/>
            <person name="Cidade D."/>
            <person name="Oliveira D."/>
            <person name="Simao T."/>
            <person name="Macedo J."/>
            <person name="Valadao A."/>
            <person name="Dreschsel M."/>
            <person name="Freitas F."/>
            <person name="Vidal M."/>
            <person name="Guedes H."/>
            <person name="Rodrigues E."/>
            <person name="Meneses C."/>
            <person name="Brioso P."/>
            <person name="Pozzer L."/>
            <person name="Figueiredo D."/>
            <person name="Montano H."/>
            <person name="Junior J."/>
            <person name="de Souza Filho G."/>
            <person name="Martin Quintana Flores V."/>
            <person name="Ferreira B."/>
            <person name="Branco A."/>
            <person name="Gonzalez P."/>
            <person name="Guillobel H."/>
            <person name="Lemos M."/>
            <person name="Seibel L."/>
            <person name="Macedo J."/>
            <person name="Alves-Ferreira M."/>
            <person name="Sachetto-Martins G."/>
            <person name="Coelho A."/>
            <person name="Santos E."/>
            <person name="Amaral G."/>
            <person name="Neves A."/>
            <person name="Pacheco A.B."/>
            <person name="Carvalho D."/>
            <person name="Lery L."/>
            <person name="Bisch P."/>
            <person name="Rossle S.C."/>
            <person name="Urmenyi T."/>
            <person name="Rael Pereira A."/>
            <person name="Silva R."/>
            <person name="Rondinelli E."/>
            <person name="von Kruger W."/>
            <person name="Martins O."/>
            <person name="Baldani J.I."/>
            <person name="Ferreira P.C."/>
        </authorList>
    </citation>
    <scope>NUCLEOTIDE SEQUENCE [LARGE SCALE GENOMIC DNA]</scope>
    <source>
        <strain>ATCC 49037 / DSM 5601 / CCUG 37298 / CIP 103539 / LMG 7603 / PAl5</strain>
    </source>
</reference>
<reference key="2">
    <citation type="journal article" date="2010" name="Stand. Genomic Sci.">
        <title>Two genome sequences of the same bacterial strain, Gluconacetobacter diazotrophicus PAl 5, suggest a new standard in genome sequence submission.</title>
        <authorList>
            <person name="Giongo A."/>
            <person name="Tyler H.L."/>
            <person name="Zipperer U.N."/>
            <person name="Triplett E.W."/>
        </authorList>
    </citation>
    <scope>NUCLEOTIDE SEQUENCE [LARGE SCALE GENOMIC DNA]</scope>
    <source>
        <strain>ATCC 49037 / DSM 5601 / CCUG 37298 / CIP 103539 / LMG 7603 / PAl5</strain>
    </source>
</reference>
<dbReference type="EC" id="3.4.21.88" evidence="1"/>
<dbReference type="EMBL" id="AM889285">
    <property type="protein sequence ID" value="CAP55866.1"/>
    <property type="molecule type" value="Genomic_DNA"/>
</dbReference>
<dbReference type="EMBL" id="CP001189">
    <property type="protein sequence ID" value="ACI49945.1"/>
    <property type="molecule type" value="Genomic_DNA"/>
</dbReference>
<dbReference type="RefSeq" id="WP_012225548.1">
    <property type="nucleotide sequence ID" value="NC_010125.1"/>
</dbReference>
<dbReference type="SMR" id="A9HJ64"/>
<dbReference type="STRING" id="272568.GDI1923"/>
<dbReference type="MEROPS" id="S24.001"/>
<dbReference type="KEGG" id="gdi:GDI1923"/>
<dbReference type="KEGG" id="gdj:Gdia_0145"/>
<dbReference type="eggNOG" id="COG1974">
    <property type="taxonomic scope" value="Bacteria"/>
</dbReference>
<dbReference type="HOGENOM" id="CLU_066192_45_2_5"/>
<dbReference type="OrthoDB" id="9802364at2"/>
<dbReference type="Proteomes" id="UP000001176">
    <property type="component" value="Chromosome"/>
</dbReference>
<dbReference type="GO" id="GO:0003677">
    <property type="term" value="F:DNA binding"/>
    <property type="evidence" value="ECO:0007669"/>
    <property type="project" value="UniProtKB-UniRule"/>
</dbReference>
<dbReference type="GO" id="GO:0004252">
    <property type="term" value="F:serine-type endopeptidase activity"/>
    <property type="evidence" value="ECO:0007669"/>
    <property type="project" value="UniProtKB-UniRule"/>
</dbReference>
<dbReference type="GO" id="GO:0006281">
    <property type="term" value="P:DNA repair"/>
    <property type="evidence" value="ECO:0007669"/>
    <property type="project" value="UniProtKB-UniRule"/>
</dbReference>
<dbReference type="GO" id="GO:0006260">
    <property type="term" value="P:DNA replication"/>
    <property type="evidence" value="ECO:0007669"/>
    <property type="project" value="UniProtKB-UniRule"/>
</dbReference>
<dbReference type="GO" id="GO:0045892">
    <property type="term" value="P:negative regulation of DNA-templated transcription"/>
    <property type="evidence" value="ECO:0007669"/>
    <property type="project" value="UniProtKB-UniRule"/>
</dbReference>
<dbReference type="GO" id="GO:0006508">
    <property type="term" value="P:proteolysis"/>
    <property type="evidence" value="ECO:0007669"/>
    <property type="project" value="InterPro"/>
</dbReference>
<dbReference type="GO" id="GO:0009432">
    <property type="term" value="P:SOS response"/>
    <property type="evidence" value="ECO:0007669"/>
    <property type="project" value="UniProtKB-UniRule"/>
</dbReference>
<dbReference type="CDD" id="cd06529">
    <property type="entry name" value="S24_LexA-like"/>
    <property type="match status" value="1"/>
</dbReference>
<dbReference type="FunFam" id="2.10.109.10:FF:000001">
    <property type="entry name" value="LexA repressor"/>
    <property type="match status" value="1"/>
</dbReference>
<dbReference type="Gene3D" id="2.10.109.10">
    <property type="entry name" value="Umud Fragment, subunit A"/>
    <property type="match status" value="1"/>
</dbReference>
<dbReference type="Gene3D" id="1.10.10.10">
    <property type="entry name" value="Winged helix-like DNA-binding domain superfamily/Winged helix DNA-binding domain"/>
    <property type="match status" value="1"/>
</dbReference>
<dbReference type="HAMAP" id="MF_00015">
    <property type="entry name" value="LexA"/>
    <property type="match status" value="1"/>
</dbReference>
<dbReference type="InterPro" id="IPR006200">
    <property type="entry name" value="LexA"/>
</dbReference>
<dbReference type="InterPro" id="IPR039418">
    <property type="entry name" value="LexA-like"/>
</dbReference>
<dbReference type="InterPro" id="IPR036286">
    <property type="entry name" value="LexA/Signal_pep-like_sf"/>
</dbReference>
<dbReference type="InterPro" id="IPR006199">
    <property type="entry name" value="LexA_DNA-bd_dom"/>
</dbReference>
<dbReference type="InterPro" id="IPR050077">
    <property type="entry name" value="LexA_repressor"/>
</dbReference>
<dbReference type="InterPro" id="IPR006197">
    <property type="entry name" value="Peptidase_S24_LexA"/>
</dbReference>
<dbReference type="InterPro" id="IPR015927">
    <property type="entry name" value="Peptidase_S24_S26A/B/C"/>
</dbReference>
<dbReference type="InterPro" id="IPR036388">
    <property type="entry name" value="WH-like_DNA-bd_sf"/>
</dbReference>
<dbReference type="InterPro" id="IPR036390">
    <property type="entry name" value="WH_DNA-bd_sf"/>
</dbReference>
<dbReference type="NCBIfam" id="TIGR00498">
    <property type="entry name" value="lexA"/>
    <property type="match status" value="1"/>
</dbReference>
<dbReference type="PANTHER" id="PTHR33516">
    <property type="entry name" value="LEXA REPRESSOR"/>
    <property type="match status" value="1"/>
</dbReference>
<dbReference type="PANTHER" id="PTHR33516:SF2">
    <property type="entry name" value="LEXA REPRESSOR-RELATED"/>
    <property type="match status" value="1"/>
</dbReference>
<dbReference type="Pfam" id="PF01726">
    <property type="entry name" value="LexA_DNA_bind"/>
    <property type="match status" value="1"/>
</dbReference>
<dbReference type="Pfam" id="PF00717">
    <property type="entry name" value="Peptidase_S24"/>
    <property type="match status" value="1"/>
</dbReference>
<dbReference type="PRINTS" id="PR00726">
    <property type="entry name" value="LEXASERPTASE"/>
</dbReference>
<dbReference type="SUPFAM" id="SSF51306">
    <property type="entry name" value="LexA/Signal peptidase"/>
    <property type="match status" value="1"/>
</dbReference>
<dbReference type="SUPFAM" id="SSF46785">
    <property type="entry name" value="Winged helix' DNA-binding domain"/>
    <property type="match status" value="1"/>
</dbReference>
<gene>
    <name evidence="1" type="primary">lexA</name>
    <name type="ordered locus">GDI1923</name>
    <name type="ordered locus">Gdia_0145</name>
</gene>
<organism>
    <name type="scientific">Gluconacetobacter diazotrophicus (strain ATCC 49037 / DSM 5601 / CCUG 37298 / CIP 103539 / LMG 7603 / PAl5)</name>
    <dbReference type="NCBI Taxonomy" id="272568"/>
    <lineage>
        <taxon>Bacteria</taxon>
        <taxon>Pseudomonadati</taxon>
        <taxon>Pseudomonadota</taxon>
        <taxon>Alphaproteobacteria</taxon>
        <taxon>Acetobacterales</taxon>
        <taxon>Acetobacteraceae</taxon>
        <taxon>Gluconacetobacter</taxon>
    </lineage>
</organism>
<comment type="function">
    <text evidence="1">Represses a number of genes involved in the response to DNA damage (SOS response), including recA and lexA. In the presence of single-stranded DNA, RecA interacts with LexA causing an autocatalytic cleavage which disrupts the DNA-binding part of LexA, leading to derepression of the SOS regulon and eventually DNA repair.</text>
</comment>
<comment type="catalytic activity">
    <reaction evidence="1">
        <text>Hydrolysis of Ala-|-Gly bond in repressor LexA.</text>
        <dbReference type="EC" id="3.4.21.88"/>
    </reaction>
</comment>
<comment type="subunit">
    <text evidence="1">Homodimer.</text>
</comment>
<comment type="similarity">
    <text evidence="1">Belongs to the peptidase S24 family.</text>
</comment>
<name>LEXA_GLUDA</name>
<protein>
    <recommendedName>
        <fullName evidence="1">LexA repressor</fullName>
        <ecNumber evidence="1">3.4.21.88</ecNumber>
    </recommendedName>
</protein>
<sequence>MLTRKQHELLLFIDRHLKQTGFSPSFDEMKDALNLRSKSGIHRLISALEERDFLRRRHHRARALEVLRLPETMPAATGKPPLAESGPPPVTAPATDESAAAESFVPNVIKGDFANRLAGASVATEAGAIHLPFYGRIAAGQPIEALRETGAQIEVPMNLLGHGEHYALEVAGDSMIEAGILDGDTVIIRRGDVAQNGQIVVALIDDQEVTLKRLRRRGSTIALEPANARYEPRIVPSDRVRIQGQLVGLLRRY</sequence>
<proteinExistence type="inferred from homology"/>